<keyword id="KW-0521">NADP</keyword>
<keyword id="KW-0560">Oxidoreductase</keyword>
<keyword id="KW-1185">Reference proteome</keyword>
<protein>
    <recommendedName>
        <fullName evidence="4">Short-chain dehydrogenase/reductase AFUA_1G00990</fullName>
        <ecNumber evidence="6">1.-.-.-</ecNumber>
    </recommendedName>
    <alternativeName>
        <fullName evidence="4">Fumigermin biosynthesis cluster protein AFUA_1G00980</fullName>
    </alternativeName>
</protein>
<accession>Q4WKX1</accession>
<name>FGNC_ASPFU</name>
<proteinExistence type="evidence at transcript level"/>
<feature type="chain" id="PRO_0000449929" description="Short-chain dehydrogenase/reductase AFUA_1G00990">
    <location>
        <begin position="1"/>
        <end position="261"/>
    </location>
</feature>
<feature type="active site" description="Proton donor" evidence="2">
    <location>
        <position position="169"/>
    </location>
</feature>
<feature type="active site" description="Lowers pKa of active site Tyr" evidence="2">
    <location>
        <position position="173"/>
    </location>
</feature>
<feature type="binding site" evidence="1">
    <location>
        <position position="19"/>
    </location>
    <ligand>
        <name>NADP(+)</name>
        <dbReference type="ChEBI" id="CHEBI:58349"/>
    </ligand>
</feature>
<feature type="binding site" evidence="1">
    <location>
        <position position="67"/>
    </location>
    <ligand>
        <name>NADP(+)</name>
        <dbReference type="ChEBI" id="CHEBI:58349"/>
    </ligand>
</feature>
<feature type="binding site" evidence="2">
    <location>
        <position position="94"/>
    </location>
    <ligand>
        <name>NADP(+)</name>
        <dbReference type="ChEBI" id="CHEBI:58349"/>
    </ligand>
</feature>
<feature type="binding site" evidence="2">
    <location>
        <position position="169"/>
    </location>
    <ligand>
        <name>NADP(+)</name>
        <dbReference type="ChEBI" id="CHEBI:58349"/>
    </ligand>
</feature>
<feature type="binding site" evidence="2">
    <location>
        <position position="173"/>
    </location>
    <ligand>
        <name>NADP(+)</name>
        <dbReference type="ChEBI" id="CHEBI:58349"/>
    </ligand>
</feature>
<feature type="binding site" evidence="1">
    <location>
        <position position="213"/>
    </location>
    <ligand>
        <name>NADP(+)</name>
        <dbReference type="ChEBI" id="CHEBI:58349"/>
    </ligand>
</feature>
<sequence>MDSNSSNKIVLVTGANQGLGFAVIEVAGVRYPSNTYILCARDIEKGQQAVHQLRDRGVAAIDLVELDVTNDDHIAAAVRHVEAQYGRLDVLVNNAGFVRLGHQDTNLSEMRATYNEYMNVHITSVAVVTHAFTPLLHRSPAPKVINVTSGLGSITNVLSPRRMARVPPYGASKVGMNGLTAHLQVSENERVAAGEAKAPRIRFFISNPGLLKTAFSNYIAWGKEPQAGAESIVQLMGDEEGKFDHAMQWEHEEGEMRVVPW</sequence>
<dbReference type="EC" id="1.-.-.-" evidence="6"/>
<dbReference type="EMBL" id="AAHF01000007">
    <property type="protein sequence ID" value="EAL87811.1"/>
    <property type="molecule type" value="Genomic_DNA"/>
</dbReference>
<dbReference type="RefSeq" id="XP_749849.1">
    <property type="nucleotide sequence ID" value="XM_744756.1"/>
</dbReference>
<dbReference type="SMR" id="Q4WKX1"/>
<dbReference type="EnsemblFungi" id="EAL87811">
    <property type="protein sequence ID" value="EAL87811"/>
    <property type="gene ID" value="AFUA_1G00990"/>
</dbReference>
<dbReference type="KEGG" id="afm:AFUA_1G00990"/>
<dbReference type="VEuPathDB" id="FungiDB:Afu1g00990"/>
<dbReference type="HOGENOM" id="CLU_010194_9_0_1"/>
<dbReference type="InParanoid" id="Q4WKX1"/>
<dbReference type="OMA" id="WGKEPQA"/>
<dbReference type="OrthoDB" id="191139at2759"/>
<dbReference type="Proteomes" id="UP000002530">
    <property type="component" value="Chromosome 1"/>
</dbReference>
<dbReference type="GO" id="GO:0016616">
    <property type="term" value="F:oxidoreductase activity, acting on the CH-OH group of donors, NAD or NADP as acceptor"/>
    <property type="evidence" value="ECO:0007669"/>
    <property type="project" value="InterPro"/>
</dbReference>
<dbReference type="GO" id="GO:0044550">
    <property type="term" value="P:secondary metabolite biosynthetic process"/>
    <property type="evidence" value="ECO:0007669"/>
    <property type="project" value="UniProtKB-ARBA"/>
</dbReference>
<dbReference type="CDD" id="cd05324">
    <property type="entry name" value="carb_red_PTCR-like_SDR_c"/>
    <property type="match status" value="1"/>
</dbReference>
<dbReference type="FunFam" id="3.40.50.720:FF:001208">
    <property type="entry name" value="Short chain dehydrogenase/reductase family protein"/>
    <property type="match status" value="1"/>
</dbReference>
<dbReference type="Gene3D" id="3.40.50.720">
    <property type="entry name" value="NAD(P)-binding Rossmann-like Domain"/>
    <property type="match status" value="1"/>
</dbReference>
<dbReference type="InterPro" id="IPR045313">
    <property type="entry name" value="CBR1-like"/>
</dbReference>
<dbReference type="InterPro" id="IPR036291">
    <property type="entry name" value="NAD(P)-bd_dom_sf"/>
</dbReference>
<dbReference type="InterPro" id="IPR020904">
    <property type="entry name" value="Sc_DH/Rdtase_CS"/>
</dbReference>
<dbReference type="InterPro" id="IPR002347">
    <property type="entry name" value="SDR_fam"/>
</dbReference>
<dbReference type="PANTHER" id="PTHR43963">
    <property type="entry name" value="CARBONYL REDUCTASE 1-RELATED"/>
    <property type="match status" value="1"/>
</dbReference>
<dbReference type="PANTHER" id="PTHR43963:SF6">
    <property type="entry name" value="CHAIN DEHYDROGENASE FAMILY PROTEIN, PUTATIVE (AFU_ORTHOLOGUE AFUA_3G15350)-RELATED"/>
    <property type="match status" value="1"/>
</dbReference>
<dbReference type="Pfam" id="PF00106">
    <property type="entry name" value="adh_short"/>
    <property type="match status" value="1"/>
</dbReference>
<dbReference type="PRINTS" id="PR00081">
    <property type="entry name" value="GDHRDH"/>
</dbReference>
<dbReference type="PRINTS" id="PR00080">
    <property type="entry name" value="SDRFAMILY"/>
</dbReference>
<dbReference type="SUPFAM" id="SSF51735">
    <property type="entry name" value="NAD(P)-binding Rossmann-fold domains"/>
    <property type="match status" value="1"/>
</dbReference>
<dbReference type="PROSITE" id="PS00061">
    <property type="entry name" value="ADH_SHORT"/>
    <property type="match status" value="1"/>
</dbReference>
<organism>
    <name type="scientific">Aspergillus fumigatus (strain ATCC MYA-4609 / CBS 101355 / FGSC A1100 / Af293)</name>
    <name type="common">Neosartorya fumigata</name>
    <dbReference type="NCBI Taxonomy" id="330879"/>
    <lineage>
        <taxon>Eukaryota</taxon>
        <taxon>Fungi</taxon>
        <taxon>Dikarya</taxon>
        <taxon>Ascomycota</taxon>
        <taxon>Pezizomycotina</taxon>
        <taxon>Eurotiomycetes</taxon>
        <taxon>Eurotiomycetidae</taxon>
        <taxon>Eurotiales</taxon>
        <taxon>Aspergillaceae</taxon>
        <taxon>Aspergillus</taxon>
        <taxon>Aspergillus subgen. Fumigati</taxon>
    </lineage>
</organism>
<comment type="function">
    <text evidence="3 6">Short-chain dehydrogenase/reductase; part of the gene cluster that mediates the biosynthesis of fumigermin that inhibits germination of spores of the inducing S.rapamycinicus, and thus helps the fungus to defend resources in the shared habitat against a bacterial competitor (PubMed:32083553). The partially reducing polyketide synthase fngA alone is sufficient for the production of fumigermin (PubMed:32083553). FgnA catalyzes the condensation of 3 malonyl-CoA units to an acetyl-CoA starter, and 3 methylations to yield fumigermin (PubMed:32083553). It is remarkable that the five cluster genes including fgnA are conserved in distantly related fungi, supporting the assumption of a fumigermin cluster; it is thus possible that originally all five genes were functional, but that the genes encoding tailoring enzymes became inactive from mutations, similar to the case of the fgnA gene in strains A1163 and Af293 (Probable).</text>
</comment>
<comment type="induction">
    <text evidence="3">Expression is up-regulated during co-cultivation of A.fumigatus with Streptomyces rapamycinicus that triggersthe production of the polyketide fumigermin during the bacterial-fungal interaction.</text>
</comment>
<comment type="similarity">
    <text evidence="5">Belongs to the short-chain dehydrogenases/reductases (SDR) family.</text>
</comment>
<reference key="1">
    <citation type="journal article" date="2005" name="Nature">
        <title>Genomic sequence of the pathogenic and allergenic filamentous fungus Aspergillus fumigatus.</title>
        <authorList>
            <person name="Nierman W.C."/>
            <person name="Pain A."/>
            <person name="Anderson M.J."/>
            <person name="Wortman J.R."/>
            <person name="Kim H.S."/>
            <person name="Arroyo J."/>
            <person name="Berriman M."/>
            <person name="Abe K."/>
            <person name="Archer D.B."/>
            <person name="Bermejo C."/>
            <person name="Bennett J.W."/>
            <person name="Bowyer P."/>
            <person name="Chen D."/>
            <person name="Collins M."/>
            <person name="Coulsen R."/>
            <person name="Davies R."/>
            <person name="Dyer P.S."/>
            <person name="Farman M.L."/>
            <person name="Fedorova N."/>
            <person name="Fedorova N.D."/>
            <person name="Feldblyum T.V."/>
            <person name="Fischer R."/>
            <person name="Fosker N."/>
            <person name="Fraser A."/>
            <person name="Garcia J.L."/>
            <person name="Garcia M.J."/>
            <person name="Goble A."/>
            <person name="Goldman G.H."/>
            <person name="Gomi K."/>
            <person name="Griffith-Jones S."/>
            <person name="Gwilliam R."/>
            <person name="Haas B.J."/>
            <person name="Haas H."/>
            <person name="Harris D.E."/>
            <person name="Horiuchi H."/>
            <person name="Huang J."/>
            <person name="Humphray S."/>
            <person name="Jimenez J."/>
            <person name="Keller N."/>
            <person name="Khouri H."/>
            <person name="Kitamoto K."/>
            <person name="Kobayashi T."/>
            <person name="Konzack S."/>
            <person name="Kulkarni R."/>
            <person name="Kumagai T."/>
            <person name="Lafton A."/>
            <person name="Latge J.-P."/>
            <person name="Li W."/>
            <person name="Lord A."/>
            <person name="Lu C."/>
            <person name="Majoros W.H."/>
            <person name="May G.S."/>
            <person name="Miller B.L."/>
            <person name="Mohamoud Y."/>
            <person name="Molina M."/>
            <person name="Monod M."/>
            <person name="Mouyna I."/>
            <person name="Mulligan S."/>
            <person name="Murphy L.D."/>
            <person name="O'Neil S."/>
            <person name="Paulsen I."/>
            <person name="Penalva M.A."/>
            <person name="Pertea M."/>
            <person name="Price C."/>
            <person name="Pritchard B.L."/>
            <person name="Quail M.A."/>
            <person name="Rabbinowitsch E."/>
            <person name="Rawlins N."/>
            <person name="Rajandream M.A."/>
            <person name="Reichard U."/>
            <person name="Renauld H."/>
            <person name="Robson G.D."/>
            <person name="Rodriguez de Cordoba S."/>
            <person name="Rodriguez-Pena J.M."/>
            <person name="Ronning C.M."/>
            <person name="Rutter S."/>
            <person name="Salzberg S.L."/>
            <person name="Sanchez M."/>
            <person name="Sanchez-Ferrero J.C."/>
            <person name="Saunders D."/>
            <person name="Seeger K."/>
            <person name="Squares R."/>
            <person name="Squares S."/>
            <person name="Takeuchi M."/>
            <person name="Tekaia F."/>
            <person name="Turner G."/>
            <person name="Vazquez de Aldana C.R."/>
            <person name="Weidman J."/>
            <person name="White O."/>
            <person name="Woodward J.R."/>
            <person name="Yu J.-H."/>
            <person name="Fraser C.M."/>
            <person name="Galagan J.E."/>
            <person name="Asai K."/>
            <person name="Machida M."/>
            <person name="Hall N."/>
            <person name="Barrell B.G."/>
            <person name="Denning D.W."/>
        </authorList>
    </citation>
    <scope>NUCLEOTIDE SEQUENCE [LARGE SCALE GENOMIC DNA]</scope>
    <source>
        <strain>ATCC MYA-4609 / CBS 101355 / FGSC A1100 / Af293</strain>
    </source>
</reference>
<reference key="2">
    <citation type="journal article" date="2020" name="Elife">
        <title>Targeted induction of a silent fungal gene cluster encoding the bacteria-specific germination inhibitor fumigermin.</title>
        <authorList>
            <person name="Stroe M.C."/>
            <person name="Netzker T."/>
            <person name="Scherlach K."/>
            <person name="Krueger T."/>
            <person name="Hertweck C."/>
            <person name="Valiante V."/>
            <person name="Brakhage A.A."/>
        </authorList>
    </citation>
    <scope>FUNCTION</scope>
</reference>
<gene>
    <name type="ORF">AFUA_1G00980</name>
</gene>
<evidence type="ECO:0000250" key="1">
    <source>
        <dbReference type="UniProtKB" id="L0E2Z4"/>
    </source>
</evidence>
<evidence type="ECO:0000250" key="2">
    <source>
        <dbReference type="UniProtKB" id="O93868"/>
    </source>
</evidence>
<evidence type="ECO:0000269" key="3">
    <source>
    </source>
</evidence>
<evidence type="ECO:0000303" key="4">
    <source>
    </source>
</evidence>
<evidence type="ECO:0000305" key="5"/>
<evidence type="ECO:0000305" key="6">
    <source>
    </source>
</evidence>